<protein>
    <recommendedName>
        <fullName evidence="7">Inactive metallocarboxypeptidase ECM14</fullName>
    </recommendedName>
</protein>
<name>ECM14_AJECH</name>
<organism>
    <name type="scientific">Ajellomyces capsulatus (strain H143)</name>
    <name type="common">Darling's disease fungus</name>
    <name type="synonym">Histoplasma capsulatum</name>
    <dbReference type="NCBI Taxonomy" id="544712"/>
    <lineage>
        <taxon>Eukaryota</taxon>
        <taxon>Fungi</taxon>
        <taxon>Dikarya</taxon>
        <taxon>Ascomycota</taxon>
        <taxon>Pezizomycotina</taxon>
        <taxon>Eurotiomycetes</taxon>
        <taxon>Eurotiomycetidae</taxon>
        <taxon>Onygenales</taxon>
        <taxon>Ajellomycetaceae</taxon>
        <taxon>Histoplasma</taxon>
    </lineage>
</organism>
<keyword id="KW-0961">Cell wall biogenesis/degradation</keyword>
<keyword id="KW-1015">Disulfide bond</keyword>
<keyword id="KW-0325">Glycoprotein</keyword>
<keyword id="KW-0479">Metal-binding</keyword>
<keyword id="KW-1185">Reference proteome</keyword>
<keyword id="KW-0964">Secreted</keyword>
<keyword id="KW-0732">Signal</keyword>
<keyword id="KW-0926">Vacuole</keyword>
<keyword id="KW-0862">Zinc</keyword>
<accession>C6H4F1</accession>
<proteinExistence type="inferred from homology"/>
<reference key="1">
    <citation type="submission" date="2009-05" db="EMBL/GenBank/DDBJ databases">
        <title>The genome sequence of Ajellomyces capsulatus strain H143.</title>
        <authorList>
            <person name="Champion M."/>
            <person name="Cuomo C.A."/>
            <person name="Ma L.-J."/>
            <person name="Henn M.R."/>
            <person name="Sil A."/>
            <person name="Goldman B."/>
            <person name="Young S.K."/>
            <person name="Kodira C.D."/>
            <person name="Zeng Q."/>
            <person name="Koehrsen M."/>
            <person name="Alvarado L."/>
            <person name="Berlin A.M."/>
            <person name="Borenstein D."/>
            <person name="Chen Z."/>
            <person name="Engels R."/>
            <person name="Freedman E."/>
            <person name="Gellesch M."/>
            <person name="Goldberg J."/>
            <person name="Griggs A."/>
            <person name="Gujja S."/>
            <person name="Heiman D.I."/>
            <person name="Hepburn T.A."/>
            <person name="Howarth C."/>
            <person name="Jen D."/>
            <person name="Larson L."/>
            <person name="Lewis B."/>
            <person name="Mehta T."/>
            <person name="Park D."/>
            <person name="Pearson M."/>
            <person name="Roberts A."/>
            <person name="Saif S."/>
            <person name="Shea T.D."/>
            <person name="Shenoy N."/>
            <person name="Sisk P."/>
            <person name="Stolte C."/>
            <person name="Sykes S."/>
            <person name="Walk T."/>
            <person name="White J."/>
            <person name="Yandava C."/>
            <person name="Klein B."/>
            <person name="McEwen J.G."/>
            <person name="Puccia R."/>
            <person name="Goldman G.H."/>
            <person name="Felipe M.S."/>
            <person name="Nino-Vega G."/>
            <person name="San-Blas G."/>
            <person name="Taylor J.W."/>
            <person name="Mendoza L."/>
            <person name="Galagan J.E."/>
            <person name="Nusbaum C."/>
            <person name="Birren B.W."/>
        </authorList>
    </citation>
    <scope>NUCLEOTIDE SEQUENCE [LARGE SCALE GENOMIC DNA]</scope>
    <source>
        <strain>H143</strain>
    </source>
</reference>
<gene>
    <name type="primary">ECM14</name>
    <name type="ORF">HCDG_01390</name>
</gene>
<comment type="function">
    <text evidence="3">Inactive carboxypeptidase that may play a role in cell wall organization and biogenesis.</text>
</comment>
<comment type="cofactor">
    <cofactor evidence="1">
        <name>Zn(2+)</name>
        <dbReference type="ChEBI" id="CHEBI:29105"/>
    </cofactor>
    <text evidence="1">Binds 1 zinc ion per subunit.</text>
</comment>
<comment type="subcellular location">
    <subcellularLocation>
        <location evidence="3">Vacuole</location>
    </subcellularLocation>
    <subcellularLocation>
        <location evidence="3">Secreted</location>
    </subcellularLocation>
</comment>
<comment type="similarity">
    <text evidence="7">Belongs to the peptidase M14 family.</text>
</comment>
<comment type="caution">
    <text evidence="3">Lacks the conserved Glu residue in position 488 essential for carbopeptidase activity. The mature form lacks catalytic activity towards synthetic peptide substrates.</text>
</comment>
<evidence type="ECO:0000250" key="1">
    <source>
        <dbReference type="UniProtKB" id="P00730"/>
    </source>
</evidence>
<evidence type="ECO:0000250" key="2">
    <source>
        <dbReference type="UniProtKB" id="P15085"/>
    </source>
</evidence>
<evidence type="ECO:0000250" key="3">
    <source>
        <dbReference type="UniProtKB" id="P38836"/>
    </source>
</evidence>
<evidence type="ECO:0000255" key="4"/>
<evidence type="ECO:0000255" key="5">
    <source>
        <dbReference type="PROSITE-ProRule" id="PRU01379"/>
    </source>
</evidence>
<evidence type="ECO:0000256" key="6">
    <source>
        <dbReference type="SAM" id="MobiDB-lite"/>
    </source>
</evidence>
<evidence type="ECO:0000305" key="7"/>
<sequence length="598" mass="67755">MRLFTHGQVLALLAFVNTISAIPSFSTNSYPAHPAEPVSIFSQHQPQAPLGLWTRLRNSVIERVWGVPPQQRHRGGNKHQYPPFSAPASLRTRYGDDVVLRFKLQTADEVKALVEASNILFLDVWSSTDEWIDIRLAKDVVPSLLGLLPKSLQTTHVPLIRDLPQTIYESYPSPFQSASGHERGFLPSGEPSSDVTNIFFENYQPLSVIVPWMRLLASMFPSHAQFISIGSSFEGRDIPALRVGVRPANDQKRRRTLIIEGGSHAREWIGVSTVNYVAYSLITSYGKSKSISTLLEQFDFIFIPTINPDGYVYTWETDRLWRKNRQETSLPFCPGVDLDRTWGFEWNGNATGDNPCLESYGGDKPFAGVEAHQLAEWVKEQTEQRNTKFVAYMDLHSYSQQILYPYSYSCLSQPPNLENLEELAMGIAKAIRLTNRKTYAVSSACGGLMASQKKKAKPETFLRMESTGGSALDWFYHDFGVKYAYQLKLRDRGSYGFLLPRENIVPTGKEVFNAVMMLGRFLLGESNAFQELDWDAGFQRPNKDDKPILNDDDDDDDADTNDDGIGRKDDSWIPDEYKGDNDRDESDGGWAFRRLRKR</sequence>
<feature type="signal peptide" evidence="4">
    <location>
        <begin position="1"/>
        <end position="21"/>
    </location>
</feature>
<feature type="propeptide" id="PRO_0000453228" evidence="3">
    <location>
        <begin position="22"/>
        <end position="174"/>
    </location>
</feature>
<feature type="chain" id="PRO_0000411169" description="Inactive metallocarboxypeptidase ECM14">
    <location>
        <begin position="175"/>
        <end position="598"/>
    </location>
</feature>
<feature type="domain" description="Peptidase M14" evidence="5">
    <location>
        <begin position="202"/>
        <end position="522"/>
    </location>
</feature>
<feature type="region of interest" description="Disordered" evidence="6">
    <location>
        <begin position="539"/>
        <end position="598"/>
    </location>
</feature>
<feature type="compositionally biased region" description="Acidic residues" evidence="6">
    <location>
        <begin position="550"/>
        <end position="562"/>
    </location>
</feature>
<feature type="compositionally biased region" description="Basic and acidic residues" evidence="6">
    <location>
        <begin position="564"/>
        <end position="581"/>
    </location>
</feature>
<feature type="binding site" evidence="1">
    <location>
        <begin position="264"/>
        <end position="267"/>
    </location>
    <ligand>
        <name>substrate</name>
    </ligand>
</feature>
<feature type="binding site" evidence="5">
    <location>
        <position position="264"/>
    </location>
    <ligand>
        <name>Zn(2+)</name>
        <dbReference type="ChEBI" id="CHEBI:29105"/>
        <note>catalytic</note>
    </ligand>
</feature>
<feature type="binding site" evidence="5">
    <location>
        <position position="267"/>
    </location>
    <ligand>
        <name>Zn(2+)</name>
        <dbReference type="ChEBI" id="CHEBI:29105"/>
        <note>catalytic</note>
    </ligand>
</feature>
<feature type="binding site" evidence="1">
    <location>
        <position position="322"/>
    </location>
    <ligand>
        <name>substrate</name>
    </ligand>
</feature>
<feature type="binding site" evidence="1">
    <location>
        <begin position="339"/>
        <end position="340"/>
    </location>
    <ligand>
        <name>substrate</name>
    </ligand>
</feature>
<feature type="binding site" evidence="5">
    <location>
        <position position="396"/>
    </location>
    <ligand>
        <name>Zn(2+)</name>
        <dbReference type="ChEBI" id="CHEBI:29105"/>
        <note>catalytic</note>
    </ligand>
</feature>
<feature type="binding site" evidence="1">
    <location>
        <begin position="397"/>
        <end position="398"/>
    </location>
    <ligand>
        <name>substrate</name>
    </ligand>
</feature>
<feature type="glycosylation site" description="N-linked (GlcNAc...) asparagine" evidence="4">
    <location>
        <position position="349"/>
    </location>
</feature>
<feature type="disulfide bond" evidence="2">
    <location>
        <begin position="333"/>
        <end position="356"/>
    </location>
</feature>
<dbReference type="EMBL" id="GG692419">
    <property type="protein sequence ID" value="EER45811.1"/>
    <property type="molecule type" value="Genomic_DNA"/>
</dbReference>
<dbReference type="SMR" id="C6H4F1"/>
<dbReference type="STRING" id="544712.C6H4F1"/>
<dbReference type="GlyCosmos" id="C6H4F1">
    <property type="glycosylation" value="1 site, No reported glycans"/>
</dbReference>
<dbReference type="VEuPathDB" id="FungiDB:HCDG_01390"/>
<dbReference type="eggNOG" id="KOG2650">
    <property type="taxonomic scope" value="Eukaryota"/>
</dbReference>
<dbReference type="HOGENOM" id="CLU_019326_1_0_1"/>
<dbReference type="OMA" id="WFYHQLH"/>
<dbReference type="OrthoDB" id="2221at299071"/>
<dbReference type="Proteomes" id="UP000002624">
    <property type="component" value="Unassembled WGS sequence"/>
</dbReference>
<dbReference type="GO" id="GO:0005576">
    <property type="term" value="C:extracellular region"/>
    <property type="evidence" value="ECO:0007669"/>
    <property type="project" value="UniProtKB-SubCell"/>
</dbReference>
<dbReference type="GO" id="GO:0005773">
    <property type="term" value="C:vacuole"/>
    <property type="evidence" value="ECO:0007669"/>
    <property type="project" value="UniProtKB-SubCell"/>
</dbReference>
<dbReference type="GO" id="GO:0008270">
    <property type="term" value="F:zinc ion binding"/>
    <property type="evidence" value="ECO:0007669"/>
    <property type="project" value="InterPro"/>
</dbReference>
<dbReference type="GO" id="GO:0071555">
    <property type="term" value="P:cell wall organization"/>
    <property type="evidence" value="ECO:0007669"/>
    <property type="project" value="UniProtKB-KW"/>
</dbReference>
<dbReference type="GO" id="GO:0006508">
    <property type="term" value="P:proteolysis"/>
    <property type="evidence" value="ECO:0007669"/>
    <property type="project" value="InterPro"/>
</dbReference>
<dbReference type="CDD" id="cd03860">
    <property type="entry name" value="M14_CP_A-B_like"/>
    <property type="match status" value="1"/>
</dbReference>
<dbReference type="FunFam" id="3.40.630.10:FF:000060">
    <property type="entry name" value="Putative metallocarboxypeptidase ecm14"/>
    <property type="match status" value="1"/>
</dbReference>
<dbReference type="Gene3D" id="3.40.630.10">
    <property type="entry name" value="Zn peptidases"/>
    <property type="match status" value="1"/>
</dbReference>
<dbReference type="InterPro" id="IPR000834">
    <property type="entry name" value="Peptidase_M14"/>
</dbReference>
<dbReference type="PANTHER" id="PTHR11705:SF147">
    <property type="entry name" value="INACTIVE METALLOCARBOXYPEPTIDASE ECM14"/>
    <property type="match status" value="1"/>
</dbReference>
<dbReference type="PANTHER" id="PTHR11705">
    <property type="entry name" value="PROTEASE FAMILY M14 CARBOXYPEPTIDASE A,B"/>
    <property type="match status" value="1"/>
</dbReference>
<dbReference type="Pfam" id="PF00246">
    <property type="entry name" value="Peptidase_M14"/>
    <property type="match status" value="1"/>
</dbReference>
<dbReference type="PRINTS" id="PR00765">
    <property type="entry name" value="CRBOXYPTASEA"/>
</dbReference>
<dbReference type="SMART" id="SM00631">
    <property type="entry name" value="Zn_pept"/>
    <property type="match status" value="1"/>
</dbReference>
<dbReference type="SUPFAM" id="SSF53187">
    <property type="entry name" value="Zn-dependent exopeptidases"/>
    <property type="match status" value="1"/>
</dbReference>
<dbReference type="PROSITE" id="PS52035">
    <property type="entry name" value="PEPTIDASE_M14"/>
    <property type="match status" value="1"/>
</dbReference>